<feature type="chain" id="PRO_1000118646" description="GTPase Der">
    <location>
        <begin position="1"/>
        <end position="490"/>
    </location>
</feature>
<feature type="domain" description="EngA-type G 1">
    <location>
        <begin position="3"/>
        <end position="166"/>
    </location>
</feature>
<feature type="domain" description="EngA-type G 2">
    <location>
        <begin position="203"/>
        <end position="376"/>
    </location>
</feature>
<feature type="domain" description="KH-like" evidence="1">
    <location>
        <begin position="377"/>
        <end position="461"/>
    </location>
</feature>
<feature type="binding site" evidence="1">
    <location>
        <begin position="9"/>
        <end position="16"/>
    </location>
    <ligand>
        <name>GTP</name>
        <dbReference type="ChEBI" id="CHEBI:37565"/>
        <label>1</label>
    </ligand>
</feature>
<feature type="binding site" evidence="1">
    <location>
        <begin position="56"/>
        <end position="60"/>
    </location>
    <ligand>
        <name>GTP</name>
        <dbReference type="ChEBI" id="CHEBI:37565"/>
        <label>1</label>
    </ligand>
</feature>
<feature type="binding site" evidence="1">
    <location>
        <begin position="118"/>
        <end position="121"/>
    </location>
    <ligand>
        <name>GTP</name>
        <dbReference type="ChEBI" id="CHEBI:37565"/>
        <label>1</label>
    </ligand>
</feature>
<feature type="binding site" evidence="1">
    <location>
        <begin position="209"/>
        <end position="216"/>
    </location>
    <ligand>
        <name>GTP</name>
        <dbReference type="ChEBI" id="CHEBI:37565"/>
        <label>2</label>
    </ligand>
</feature>
<feature type="binding site" evidence="1">
    <location>
        <begin position="256"/>
        <end position="260"/>
    </location>
    <ligand>
        <name>GTP</name>
        <dbReference type="ChEBI" id="CHEBI:37565"/>
        <label>2</label>
    </ligand>
</feature>
<feature type="binding site" evidence="1">
    <location>
        <begin position="321"/>
        <end position="324"/>
    </location>
    <ligand>
        <name>GTP</name>
        <dbReference type="ChEBI" id="CHEBI:37565"/>
        <label>2</label>
    </ligand>
</feature>
<dbReference type="EMBL" id="CU928163">
    <property type="protein sequence ID" value="CAR14008.1"/>
    <property type="molecule type" value="Genomic_DNA"/>
</dbReference>
<dbReference type="RefSeq" id="WP_001309661.1">
    <property type="nucleotide sequence ID" value="NC_011751.1"/>
</dbReference>
<dbReference type="RefSeq" id="YP_002413533.1">
    <property type="nucleotide sequence ID" value="NC_011751.1"/>
</dbReference>
<dbReference type="SMR" id="B7N699"/>
<dbReference type="STRING" id="585056.ECUMN_2831"/>
<dbReference type="KEGG" id="eum:ECUMN_2831"/>
<dbReference type="PATRIC" id="fig|585056.7.peg.3016"/>
<dbReference type="HOGENOM" id="CLU_016077_6_2_6"/>
<dbReference type="Proteomes" id="UP000007097">
    <property type="component" value="Chromosome"/>
</dbReference>
<dbReference type="GO" id="GO:0005525">
    <property type="term" value="F:GTP binding"/>
    <property type="evidence" value="ECO:0007669"/>
    <property type="project" value="UniProtKB-UniRule"/>
</dbReference>
<dbReference type="GO" id="GO:0043022">
    <property type="term" value="F:ribosome binding"/>
    <property type="evidence" value="ECO:0007669"/>
    <property type="project" value="TreeGrafter"/>
</dbReference>
<dbReference type="GO" id="GO:0042254">
    <property type="term" value="P:ribosome biogenesis"/>
    <property type="evidence" value="ECO:0007669"/>
    <property type="project" value="UniProtKB-KW"/>
</dbReference>
<dbReference type="CDD" id="cd01894">
    <property type="entry name" value="EngA1"/>
    <property type="match status" value="1"/>
</dbReference>
<dbReference type="CDD" id="cd01895">
    <property type="entry name" value="EngA2"/>
    <property type="match status" value="1"/>
</dbReference>
<dbReference type="FunFam" id="3.30.300.20:FF:000004">
    <property type="entry name" value="GTPase Der"/>
    <property type="match status" value="1"/>
</dbReference>
<dbReference type="FunFam" id="3.40.50.300:FF:000040">
    <property type="entry name" value="GTPase Der"/>
    <property type="match status" value="1"/>
</dbReference>
<dbReference type="FunFam" id="3.40.50.300:FF:000057">
    <property type="entry name" value="GTPase Der"/>
    <property type="match status" value="1"/>
</dbReference>
<dbReference type="Gene3D" id="3.30.300.20">
    <property type="match status" value="1"/>
</dbReference>
<dbReference type="Gene3D" id="3.40.50.300">
    <property type="entry name" value="P-loop containing nucleotide triphosphate hydrolases"/>
    <property type="match status" value="2"/>
</dbReference>
<dbReference type="HAMAP" id="MF_00195">
    <property type="entry name" value="GTPase_Der"/>
    <property type="match status" value="1"/>
</dbReference>
<dbReference type="InterPro" id="IPR031166">
    <property type="entry name" value="G_ENGA"/>
</dbReference>
<dbReference type="InterPro" id="IPR006073">
    <property type="entry name" value="GTP-bd"/>
</dbReference>
<dbReference type="InterPro" id="IPR016484">
    <property type="entry name" value="GTPase_Der"/>
</dbReference>
<dbReference type="InterPro" id="IPR032859">
    <property type="entry name" value="KH_dom-like"/>
</dbReference>
<dbReference type="InterPro" id="IPR015946">
    <property type="entry name" value="KH_dom-like_a/b"/>
</dbReference>
<dbReference type="InterPro" id="IPR027417">
    <property type="entry name" value="P-loop_NTPase"/>
</dbReference>
<dbReference type="InterPro" id="IPR005225">
    <property type="entry name" value="Small_GTP-bd"/>
</dbReference>
<dbReference type="NCBIfam" id="TIGR03594">
    <property type="entry name" value="GTPase_EngA"/>
    <property type="match status" value="1"/>
</dbReference>
<dbReference type="NCBIfam" id="TIGR00231">
    <property type="entry name" value="small_GTP"/>
    <property type="match status" value="2"/>
</dbReference>
<dbReference type="PANTHER" id="PTHR43834">
    <property type="entry name" value="GTPASE DER"/>
    <property type="match status" value="1"/>
</dbReference>
<dbReference type="PANTHER" id="PTHR43834:SF6">
    <property type="entry name" value="GTPASE DER"/>
    <property type="match status" value="1"/>
</dbReference>
<dbReference type="Pfam" id="PF14714">
    <property type="entry name" value="KH_dom-like"/>
    <property type="match status" value="1"/>
</dbReference>
<dbReference type="Pfam" id="PF01926">
    <property type="entry name" value="MMR_HSR1"/>
    <property type="match status" value="2"/>
</dbReference>
<dbReference type="PIRSF" id="PIRSF006485">
    <property type="entry name" value="GTP-binding_EngA"/>
    <property type="match status" value="1"/>
</dbReference>
<dbReference type="PRINTS" id="PR00326">
    <property type="entry name" value="GTP1OBG"/>
</dbReference>
<dbReference type="SUPFAM" id="SSF52540">
    <property type="entry name" value="P-loop containing nucleoside triphosphate hydrolases"/>
    <property type="match status" value="2"/>
</dbReference>
<dbReference type="PROSITE" id="PS51712">
    <property type="entry name" value="G_ENGA"/>
    <property type="match status" value="2"/>
</dbReference>
<protein>
    <recommendedName>
        <fullName evidence="1">GTPase Der</fullName>
    </recommendedName>
    <alternativeName>
        <fullName evidence="1">GTP-binding protein EngA</fullName>
    </alternativeName>
</protein>
<evidence type="ECO:0000255" key="1">
    <source>
        <dbReference type="HAMAP-Rule" id="MF_00195"/>
    </source>
</evidence>
<gene>
    <name evidence="1" type="primary">der</name>
    <name type="synonym">engA</name>
    <name type="ordered locus">ECUMN_2831</name>
</gene>
<comment type="function">
    <text evidence="1">GTPase that plays an essential role in the late steps of ribosome biogenesis.</text>
</comment>
<comment type="subunit">
    <text evidence="1">Associates with the 50S ribosomal subunit.</text>
</comment>
<comment type="similarity">
    <text evidence="1">Belongs to the TRAFAC class TrmE-Era-EngA-EngB-Septin-like GTPase superfamily. EngA (Der) GTPase family.</text>
</comment>
<keyword id="KW-0342">GTP-binding</keyword>
<keyword id="KW-0547">Nucleotide-binding</keyword>
<keyword id="KW-0677">Repeat</keyword>
<keyword id="KW-0690">Ribosome biogenesis</keyword>
<organism>
    <name type="scientific">Escherichia coli O17:K52:H18 (strain UMN026 / ExPEC)</name>
    <dbReference type="NCBI Taxonomy" id="585056"/>
    <lineage>
        <taxon>Bacteria</taxon>
        <taxon>Pseudomonadati</taxon>
        <taxon>Pseudomonadota</taxon>
        <taxon>Gammaproteobacteria</taxon>
        <taxon>Enterobacterales</taxon>
        <taxon>Enterobacteriaceae</taxon>
        <taxon>Escherichia</taxon>
    </lineage>
</organism>
<accession>B7N699</accession>
<sequence>MVPVVALVGRPNVGKSTLFNRLTRTRDALVADFPGLTRDRKYGRAEIEGREFICIDTGGIDGTEDGVETRMAEQSLLAIEEADVVLFMVDARAGLMPADEAIAKHLRSREKPTFLVANKTDGLDPDQAVVDFYSLGLGEIYPIAASHGRGVLSLLEHVLLPWMEDLAPQEEVDEDAEYWAQFEAEENGEEEEEDDFDPQSLPIKLAIVGRPNVGKSTLTNRILGEERVVVYDMPGTTRDSIYIPMERDGREYVLIDTAGVRKRGKITDAVEKFSVIKTLQAIEDANVVMLVIDAREGISDQDLSLLGFILNSGRSLVIVVNKWDGLSQEVKEQVKETLDFRLGFIDFARVHFISALHGSGVGNLFESVREAYDSSTRRVGTSMLTRIMTMAVEDHQPPLVRGRRVKLKYAHAGGYNPPIVVIHGNQVKDLPDSYKRYLMNYFRKSLDVMGSPIRIQFKEGENPYANKRNTLTPTQMRKRKRLMKHIKKSK</sequence>
<reference key="1">
    <citation type="journal article" date="2009" name="PLoS Genet.">
        <title>Organised genome dynamics in the Escherichia coli species results in highly diverse adaptive paths.</title>
        <authorList>
            <person name="Touchon M."/>
            <person name="Hoede C."/>
            <person name="Tenaillon O."/>
            <person name="Barbe V."/>
            <person name="Baeriswyl S."/>
            <person name="Bidet P."/>
            <person name="Bingen E."/>
            <person name="Bonacorsi S."/>
            <person name="Bouchier C."/>
            <person name="Bouvet O."/>
            <person name="Calteau A."/>
            <person name="Chiapello H."/>
            <person name="Clermont O."/>
            <person name="Cruveiller S."/>
            <person name="Danchin A."/>
            <person name="Diard M."/>
            <person name="Dossat C."/>
            <person name="Karoui M.E."/>
            <person name="Frapy E."/>
            <person name="Garry L."/>
            <person name="Ghigo J.M."/>
            <person name="Gilles A.M."/>
            <person name="Johnson J."/>
            <person name="Le Bouguenec C."/>
            <person name="Lescat M."/>
            <person name="Mangenot S."/>
            <person name="Martinez-Jehanne V."/>
            <person name="Matic I."/>
            <person name="Nassif X."/>
            <person name="Oztas S."/>
            <person name="Petit M.A."/>
            <person name="Pichon C."/>
            <person name="Rouy Z."/>
            <person name="Ruf C.S."/>
            <person name="Schneider D."/>
            <person name="Tourret J."/>
            <person name="Vacherie B."/>
            <person name="Vallenet D."/>
            <person name="Medigue C."/>
            <person name="Rocha E.P.C."/>
            <person name="Denamur E."/>
        </authorList>
    </citation>
    <scope>NUCLEOTIDE SEQUENCE [LARGE SCALE GENOMIC DNA]</scope>
    <source>
        <strain>UMN026 / ExPEC</strain>
    </source>
</reference>
<name>DER_ECOLU</name>
<proteinExistence type="inferred from homology"/>